<reference key="1">
    <citation type="journal article" date="2006" name="J. Bacteriol.">
        <title>The genome of the obligately intracellular bacterium Ehrlichia canis reveals themes of complex membrane structure and immune evasion strategies.</title>
        <authorList>
            <person name="Mavromatis K."/>
            <person name="Doyle C.K."/>
            <person name="Lykidis A."/>
            <person name="Ivanova N."/>
            <person name="Francino M.P."/>
            <person name="Chain P."/>
            <person name="Shin M."/>
            <person name="Malfatti S."/>
            <person name="Larimer F."/>
            <person name="Copeland A."/>
            <person name="Detter J.C."/>
            <person name="Land M."/>
            <person name="Richardson P.M."/>
            <person name="Yu X.J."/>
            <person name="Walker D.H."/>
            <person name="McBride J.W."/>
            <person name="Kyrpides N.C."/>
        </authorList>
    </citation>
    <scope>NUCLEOTIDE SEQUENCE [LARGE SCALE GENOMIC DNA]</scope>
    <source>
        <strain>Jake</strain>
    </source>
</reference>
<proteinExistence type="inferred from homology"/>
<organism>
    <name type="scientific">Ehrlichia canis (strain Jake)</name>
    <dbReference type="NCBI Taxonomy" id="269484"/>
    <lineage>
        <taxon>Bacteria</taxon>
        <taxon>Pseudomonadati</taxon>
        <taxon>Pseudomonadota</taxon>
        <taxon>Alphaproteobacteria</taxon>
        <taxon>Rickettsiales</taxon>
        <taxon>Anaplasmataceae</taxon>
        <taxon>Ehrlichia</taxon>
    </lineage>
</organism>
<accession>Q3YRL5</accession>
<name>RS3_EHRCJ</name>
<dbReference type="EMBL" id="CP000107">
    <property type="protein sequence ID" value="AAZ68640.1"/>
    <property type="molecule type" value="Genomic_DNA"/>
</dbReference>
<dbReference type="RefSeq" id="WP_011304718.1">
    <property type="nucleotide sequence ID" value="NC_007354.1"/>
</dbReference>
<dbReference type="SMR" id="Q3YRL5"/>
<dbReference type="FunCoup" id="Q3YRL5">
    <property type="interactions" value="369"/>
</dbReference>
<dbReference type="STRING" id="269484.Ecaj_0606"/>
<dbReference type="KEGG" id="ecn:Ecaj_0606"/>
<dbReference type="eggNOG" id="COG0092">
    <property type="taxonomic scope" value="Bacteria"/>
</dbReference>
<dbReference type="HOGENOM" id="CLU_058591_0_2_5"/>
<dbReference type="InParanoid" id="Q3YRL5"/>
<dbReference type="Proteomes" id="UP000000435">
    <property type="component" value="Chromosome"/>
</dbReference>
<dbReference type="GO" id="GO:0022627">
    <property type="term" value="C:cytosolic small ribosomal subunit"/>
    <property type="evidence" value="ECO:0007669"/>
    <property type="project" value="TreeGrafter"/>
</dbReference>
<dbReference type="GO" id="GO:0003729">
    <property type="term" value="F:mRNA binding"/>
    <property type="evidence" value="ECO:0007669"/>
    <property type="project" value="UniProtKB-UniRule"/>
</dbReference>
<dbReference type="GO" id="GO:0019843">
    <property type="term" value="F:rRNA binding"/>
    <property type="evidence" value="ECO:0007669"/>
    <property type="project" value="UniProtKB-UniRule"/>
</dbReference>
<dbReference type="GO" id="GO:0003735">
    <property type="term" value="F:structural constituent of ribosome"/>
    <property type="evidence" value="ECO:0007669"/>
    <property type="project" value="InterPro"/>
</dbReference>
<dbReference type="GO" id="GO:0006412">
    <property type="term" value="P:translation"/>
    <property type="evidence" value="ECO:0007669"/>
    <property type="project" value="UniProtKB-UniRule"/>
</dbReference>
<dbReference type="CDD" id="cd02412">
    <property type="entry name" value="KH-II_30S_S3"/>
    <property type="match status" value="1"/>
</dbReference>
<dbReference type="FunFam" id="3.30.1140.32:FF:000002">
    <property type="entry name" value="30S ribosomal protein S3"/>
    <property type="match status" value="1"/>
</dbReference>
<dbReference type="FunFam" id="3.30.300.20:FF:000001">
    <property type="entry name" value="30S ribosomal protein S3"/>
    <property type="match status" value="1"/>
</dbReference>
<dbReference type="Gene3D" id="3.30.300.20">
    <property type="match status" value="1"/>
</dbReference>
<dbReference type="Gene3D" id="3.30.1140.32">
    <property type="entry name" value="Ribosomal protein S3, C-terminal domain"/>
    <property type="match status" value="1"/>
</dbReference>
<dbReference type="HAMAP" id="MF_01309_B">
    <property type="entry name" value="Ribosomal_uS3_B"/>
    <property type="match status" value="1"/>
</dbReference>
<dbReference type="InterPro" id="IPR004087">
    <property type="entry name" value="KH_dom"/>
</dbReference>
<dbReference type="InterPro" id="IPR015946">
    <property type="entry name" value="KH_dom-like_a/b"/>
</dbReference>
<dbReference type="InterPro" id="IPR004044">
    <property type="entry name" value="KH_dom_type_2"/>
</dbReference>
<dbReference type="InterPro" id="IPR009019">
    <property type="entry name" value="KH_sf_prok-type"/>
</dbReference>
<dbReference type="InterPro" id="IPR036419">
    <property type="entry name" value="Ribosomal_S3_C_sf"/>
</dbReference>
<dbReference type="InterPro" id="IPR005704">
    <property type="entry name" value="Ribosomal_uS3_bac-typ"/>
</dbReference>
<dbReference type="InterPro" id="IPR001351">
    <property type="entry name" value="Ribosomal_uS3_C"/>
</dbReference>
<dbReference type="InterPro" id="IPR018280">
    <property type="entry name" value="Ribosomal_uS3_CS"/>
</dbReference>
<dbReference type="NCBIfam" id="TIGR01009">
    <property type="entry name" value="rpsC_bact"/>
    <property type="match status" value="1"/>
</dbReference>
<dbReference type="PANTHER" id="PTHR11760">
    <property type="entry name" value="30S/40S RIBOSOMAL PROTEIN S3"/>
    <property type="match status" value="1"/>
</dbReference>
<dbReference type="PANTHER" id="PTHR11760:SF19">
    <property type="entry name" value="SMALL RIBOSOMAL SUBUNIT PROTEIN US3C"/>
    <property type="match status" value="1"/>
</dbReference>
<dbReference type="Pfam" id="PF07650">
    <property type="entry name" value="KH_2"/>
    <property type="match status" value="1"/>
</dbReference>
<dbReference type="Pfam" id="PF00189">
    <property type="entry name" value="Ribosomal_S3_C"/>
    <property type="match status" value="1"/>
</dbReference>
<dbReference type="SMART" id="SM00322">
    <property type="entry name" value="KH"/>
    <property type="match status" value="1"/>
</dbReference>
<dbReference type="SUPFAM" id="SSF54814">
    <property type="entry name" value="Prokaryotic type KH domain (KH-domain type II)"/>
    <property type="match status" value="1"/>
</dbReference>
<dbReference type="SUPFAM" id="SSF54821">
    <property type="entry name" value="Ribosomal protein S3 C-terminal domain"/>
    <property type="match status" value="1"/>
</dbReference>
<dbReference type="PROSITE" id="PS50823">
    <property type="entry name" value="KH_TYPE_2"/>
    <property type="match status" value="1"/>
</dbReference>
<dbReference type="PROSITE" id="PS00548">
    <property type="entry name" value="RIBOSOMAL_S3"/>
    <property type="match status" value="1"/>
</dbReference>
<feature type="chain" id="PRO_0000230697" description="Small ribosomal subunit protein uS3">
    <location>
        <begin position="1"/>
        <end position="211"/>
    </location>
</feature>
<feature type="domain" description="KH type-2" evidence="1">
    <location>
        <begin position="38"/>
        <end position="106"/>
    </location>
</feature>
<protein>
    <recommendedName>
        <fullName evidence="1">Small ribosomal subunit protein uS3</fullName>
    </recommendedName>
    <alternativeName>
        <fullName evidence="2">30S ribosomal protein S3</fullName>
    </alternativeName>
</protein>
<sequence>MGQKCNPIGLRLKIINTWDSLWYANKDYTTKLHEDFLLRKFIKKAFYHAAISKVVIARKVDLIMVNVYSAKPGVIIGKKGADIDKVKQQIVKMINNNIELNIIEVKKPELKAVLIAENIAQQLEKRISFRRAMKRSVQNCLKIGAKGIKVSCAGRLGGAEIARTEWYKEGSVPLHTFRANIDYGFSEAKTIYGIIGVKVWVYLGETKSSNE</sequence>
<gene>
    <name evidence="1" type="primary">rpsC</name>
    <name type="ordered locus">Ecaj_0606</name>
</gene>
<comment type="function">
    <text evidence="1">Binds the lower part of the 30S subunit head. Binds mRNA in the 70S ribosome, positioning it for translation.</text>
</comment>
<comment type="subunit">
    <text evidence="1">Part of the 30S ribosomal subunit. Forms a tight complex with proteins S10 and S14.</text>
</comment>
<comment type="similarity">
    <text evidence="1">Belongs to the universal ribosomal protein uS3 family.</text>
</comment>
<evidence type="ECO:0000255" key="1">
    <source>
        <dbReference type="HAMAP-Rule" id="MF_01309"/>
    </source>
</evidence>
<evidence type="ECO:0000305" key="2"/>
<keyword id="KW-0687">Ribonucleoprotein</keyword>
<keyword id="KW-0689">Ribosomal protein</keyword>
<keyword id="KW-0694">RNA-binding</keyword>
<keyword id="KW-0699">rRNA-binding</keyword>